<evidence type="ECO:0000255" key="1">
    <source>
        <dbReference type="HAMAP-Rule" id="MF_01451"/>
    </source>
</evidence>
<comment type="function">
    <text evidence="1">The heterodimer acts as both an ATP-dependent DNA helicase and an ATP-dependent, dual-direction single-stranded exonuclease. Recognizes the chi site generating a DNA molecule suitable for the initiation of homologous recombination. The AddA nuclease domain is required for chi fragment generation; this subunit has the helicase and 3' -&gt; 5' nuclease activities.</text>
</comment>
<comment type="catalytic activity">
    <reaction evidence="1">
        <text>Couples ATP hydrolysis with the unwinding of duplex DNA by translocating in the 3'-5' direction.</text>
        <dbReference type="EC" id="5.6.2.4"/>
    </reaction>
</comment>
<comment type="catalytic activity">
    <reaction evidence="1">
        <text>ATP + H2O = ADP + phosphate + H(+)</text>
        <dbReference type="Rhea" id="RHEA:13065"/>
        <dbReference type="ChEBI" id="CHEBI:15377"/>
        <dbReference type="ChEBI" id="CHEBI:15378"/>
        <dbReference type="ChEBI" id="CHEBI:30616"/>
        <dbReference type="ChEBI" id="CHEBI:43474"/>
        <dbReference type="ChEBI" id="CHEBI:456216"/>
        <dbReference type="EC" id="5.6.2.4"/>
    </reaction>
</comment>
<comment type="cofactor">
    <cofactor evidence="1">
        <name>Mg(2+)</name>
        <dbReference type="ChEBI" id="CHEBI:18420"/>
    </cofactor>
</comment>
<comment type="subunit">
    <text evidence="1">Heterodimer of AddA and AddB/RexB.</text>
</comment>
<comment type="similarity">
    <text evidence="1">Belongs to the helicase family. AddA subfamily.</text>
</comment>
<keyword id="KW-0067">ATP-binding</keyword>
<keyword id="KW-0227">DNA damage</keyword>
<keyword id="KW-0234">DNA repair</keyword>
<keyword id="KW-0238">DNA-binding</keyword>
<keyword id="KW-0269">Exonuclease</keyword>
<keyword id="KW-0347">Helicase</keyword>
<keyword id="KW-0378">Hydrolase</keyword>
<keyword id="KW-0413">Isomerase</keyword>
<keyword id="KW-0540">Nuclease</keyword>
<keyword id="KW-0547">Nucleotide-binding</keyword>
<keyword id="KW-1185">Reference proteome</keyword>
<gene>
    <name evidence="1" type="primary">addA</name>
    <name type="ordered locus">PTH_1664</name>
</gene>
<name>ADDA_PELTS</name>
<protein>
    <recommendedName>
        <fullName evidence="1">ATP-dependent helicase/nuclease subunit A</fullName>
        <ecNumber evidence="1">3.1.-.-</ecNumber>
        <ecNumber evidence="1">5.6.2.4</ecNumber>
    </recommendedName>
    <alternativeName>
        <fullName evidence="1">ATP-dependent helicase/nuclease AddA</fullName>
    </alternativeName>
    <alternativeName>
        <fullName evidence="1">DNA 3'-5' helicase AddA</fullName>
    </alternativeName>
</protein>
<dbReference type="EC" id="3.1.-.-" evidence="1"/>
<dbReference type="EC" id="5.6.2.4" evidence="1"/>
<dbReference type="EMBL" id="AP009389">
    <property type="protein sequence ID" value="BAF59845.1"/>
    <property type="molecule type" value="Genomic_DNA"/>
</dbReference>
<dbReference type="SMR" id="A5D1P3"/>
<dbReference type="STRING" id="370438.PTH_1664"/>
<dbReference type="KEGG" id="pth:PTH_1664"/>
<dbReference type="eggNOG" id="COG1074">
    <property type="taxonomic scope" value="Bacteria"/>
</dbReference>
<dbReference type="HOGENOM" id="CLU_001114_3_1_9"/>
<dbReference type="Proteomes" id="UP000006556">
    <property type="component" value="Chromosome"/>
</dbReference>
<dbReference type="GO" id="GO:0005829">
    <property type="term" value="C:cytosol"/>
    <property type="evidence" value="ECO:0007669"/>
    <property type="project" value="TreeGrafter"/>
</dbReference>
<dbReference type="GO" id="GO:0033202">
    <property type="term" value="C:DNA helicase complex"/>
    <property type="evidence" value="ECO:0007669"/>
    <property type="project" value="TreeGrafter"/>
</dbReference>
<dbReference type="GO" id="GO:0043138">
    <property type="term" value="F:3'-5' DNA helicase activity"/>
    <property type="evidence" value="ECO:0007669"/>
    <property type="project" value="UniProtKB-UniRule"/>
</dbReference>
<dbReference type="GO" id="GO:0008408">
    <property type="term" value="F:3'-5' exonuclease activity"/>
    <property type="evidence" value="ECO:0007669"/>
    <property type="project" value="UniProtKB-UniRule"/>
</dbReference>
<dbReference type="GO" id="GO:0005524">
    <property type="term" value="F:ATP binding"/>
    <property type="evidence" value="ECO:0007669"/>
    <property type="project" value="UniProtKB-UniRule"/>
</dbReference>
<dbReference type="GO" id="GO:0016887">
    <property type="term" value="F:ATP hydrolysis activity"/>
    <property type="evidence" value="ECO:0007669"/>
    <property type="project" value="RHEA"/>
</dbReference>
<dbReference type="GO" id="GO:0003690">
    <property type="term" value="F:double-stranded DNA binding"/>
    <property type="evidence" value="ECO:0007669"/>
    <property type="project" value="UniProtKB-UniRule"/>
</dbReference>
<dbReference type="GO" id="GO:0000724">
    <property type="term" value="P:double-strand break repair via homologous recombination"/>
    <property type="evidence" value="ECO:0007669"/>
    <property type="project" value="UniProtKB-UniRule"/>
</dbReference>
<dbReference type="CDD" id="cd17932">
    <property type="entry name" value="DEXQc_UvrD"/>
    <property type="match status" value="1"/>
</dbReference>
<dbReference type="FunFam" id="3.40.50.300:FF:001236">
    <property type="entry name" value="ATP-dependent helicase/nuclease subunit A"/>
    <property type="match status" value="1"/>
</dbReference>
<dbReference type="Gene3D" id="1.10.274.50">
    <property type="match status" value="1"/>
</dbReference>
<dbReference type="Gene3D" id="3.90.320.10">
    <property type="match status" value="1"/>
</dbReference>
<dbReference type="Gene3D" id="3.40.50.300">
    <property type="entry name" value="P-loop containing nucleotide triphosphate hydrolases"/>
    <property type="match status" value="4"/>
</dbReference>
<dbReference type="HAMAP" id="MF_01451">
    <property type="entry name" value="AddA"/>
    <property type="match status" value="1"/>
</dbReference>
<dbReference type="InterPro" id="IPR014152">
    <property type="entry name" value="AddA"/>
</dbReference>
<dbReference type="InterPro" id="IPR014017">
    <property type="entry name" value="DNA_helicase_UvrD-like_C"/>
</dbReference>
<dbReference type="InterPro" id="IPR000212">
    <property type="entry name" value="DNA_helicase_UvrD/REP"/>
</dbReference>
<dbReference type="InterPro" id="IPR027417">
    <property type="entry name" value="P-loop_NTPase"/>
</dbReference>
<dbReference type="InterPro" id="IPR011604">
    <property type="entry name" value="PDDEXK-like_dom_sf"/>
</dbReference>
<dbReference type="InterPro" id="IPR038726">
    <property type="entry name" value="PDDEXK_AddAB-type"/>
</dbReference>
<dbReference type="InterPro" id="IPR011335">
    <property type="entry name" value="Restrct_endonuc-II-like"/>
</dbReference>
<dbReference type="InterPro" id="IPR014016">
    <property type="entry name" value="UvrD-like_ATP-bd"/>
</dbReference>
<dbReference type="NCBIfam" id="TIGR02785">
    <property type="entry name" value="addA_Gpos"/>
    <property type="match status" value="1"/>
</dbReference>
<dbReference type="PANTHER" id="PTHR11070:SF48">
    <property type="entry name" value="ATP-DEPENDENT HELICASE_NUCLEASE SUBUNIT A"/>
    <property type="match status" value="1"/>
</dbReference>
<dbReference type="PANTHER" id="PTHR11070">
    <property type="entry name" value="UVRD / RECB / PCRA DNA HELICASE FAMILY MEMBER"/>
    <property type="match status" value="1"/>
</dbReference>
<dbReference type="Pfam" id="PF12705">
    <property type="entry name" value="PDDEXK_1"/>
    <property type="match status" value="1"/>
</dbReference>
<dbReference type="Pfam" id="PF00580">
    <property type="entry name" value="UvrD-helicase"/>
    <property type="match status" value="1"/>
</dbReference>
<dbReference type="Pfam" id="PF13361">
    <property type="entry name" value="UvrD_C"/>
    <property type="match status" value="2"/>
</dbReference>
<dbReference type="SUPFAM" id="SSF52540">
    <property type="entry name" value="P-loop containing nucleoside triphosphate hydrolases"/>
    <property type="match status" value="1"/>
</dbReference>
<dbReference type="SUPFAM" id="SSF52980">
    <property type="entry name" value="Restriction endonuclease-like"/>
    <property type="match status" value="1"/>
</dbReference>
<dbReference type="PROSITE" id="PS51198">
    <property type="entry name" value="UVRD_HELICASE_ATP_BIND"/>
    <property type="match status" value="1"/>
</dbReference>
<dbReference type="PROSITE" id="PS51217">
    <property type="entry name" value="UVRD_HELICASE_CTER"/>
    <property type="match status" value="1"/>
</dbReference>
<organism>
    <name type="scientific">Pelotomaculum thermopropionicum (strain DSM 13744 / JCM 10971 / SI)</name>
    <dbReference type="NCBI Taxonomy" id="370438"/>
    <lineage>
        <taxon>Bacteria</taxon>
        <taxon>Bacillati</taxon>
        <taxon>Bacillota</taxon>
        <taxon>Clostridia</taxon>
        <taxon>Eubacteriales</taxon>
        <taxon>Desulfotomaculaceae</taxon>
        <taxon>Pelotomaculum</taxon>
    </lineage>
</organism>
<reference key="1">
    <citation type="journal article" date="2008" name="Genome Res.">
        <title>The genome of Pelotomaculum thermopropionicum reveals niche-associated evolution in anaerobic microbiota.</title>
        <authorList>
            <person name="Kosaka T."/>
            <person name="Kato S."/>
            <person name="Shimoyama T."/>
            <person name="Ishii S."/>
            <person name="Abe T."/>
            <person name="Watanabe K."/>
        </authorList>
    </citation>
    <scope>NUCLEOTIDE SEQUENCE [LARGE SCALE GENOMIC DNA]</scope>
    <source>
        <strain>DSM 13744 / JCM 10971 / SI</strain>
    </source>
</reference>
<feature type="chain" id="PRO_0000379306" description="ATP-dependent helicase/nuclease subunit A">
    <location>
        <begin position="1"/>
        <end position="1269"/>
    </location>
</feature>
<feature type="domain" description="UvrD-like helicase ATP-binding" evidence="1">
    <location>
        <begin position="17"/>
        <end position="492"/>
    </location>
</feature>
<feature type="domain" description="UvrD-like helicase C-terminal" evidence="1">
    <location>
        <begin position="541"/>
        <end position="838"/>
    </location>
</feature>
<feature type="binding site" evidence="1">
    <location>
        <begin position="38"/>
        <end position="45"/>
    </location>
    <ligand>
        <name>ATP</name>
        <dbReference type="ChEBI" id="CHEBI:30616"/>
    </ligand>
</feature>
<proteinExistence type="inferred from homology"/>
<accession>A5D1P3</accession>
<sequence length="1269" mass="139981">MEQTGPDVPERVGAMSGGWTAEQLEAISARGGDVLVAASAGTGKTAVLAERIIRRITDPIKPVDVDRLLVVTFTSAAAAEMRERIRLALAREISRRPESGHLQRQAALLGRACISTVHSFCLDLLRQHFYRIGLDPSFRVADETEAALIQTGALEEVFERRYAAEDNIFAALVDCYGGRHDDALLQELVLDAYKFARSTPWPEDWLDGLAEGFNLPGGASFDRTPWSAVLKQAAEIELAGARADLEAALRIAREPGGPQAYLANLEQEHDLVCRLLQSCRTNAPWAELYSYFKEVVFSPLKQCRKEDADLKLAGQARNFRESAKKKVMQVKSRYFSLPPEDLCADLRRMAPLIKELAGLVREFDATYRKAKAARGVVDFNDLEHYCLQVLAEKGPSGAVPSQVAHELQEKFVEVLVDEYQDINAVQETILQMVSRKGEGQSNLFMVGDVKQSIYRFRLAEPGLFLKKYASFSAGTGGGQGRRLALTANFRSRQGVVSAVNFIFKQIMTPAVGEMAYGSDAMLVYGADYPPVPEGQGNYEEAVELHLVERGPAGKDGGGDDPAGEEADGGVEAVEEIEEELEAGQKEARLVARRIKELLGGSPGGEHALEIYDRELKKYRPLTYRDVAVLLRATAGYANSFVEEFRREGIPAYAELSTGYFESTEVETVISLLKVIDNPRQDIPLAGVLRSPAVGLKAGDLARIRLASPRGDFYDAVVAASLAGQGELSERLADFLKKLEEWRTIARQGTLADLIWAVYRDTGYYDFTGCLPGGGQRQANLRALHDRARQFETTAFRGLFLFLRFIERLREGGRDFGAARLLSEKENVVRIMSIHKSKGLEFPVVFVAGLGRNFNFRNLNKAVLFHKDLGLGPQLVDAEARVTRPTAAKLALKHRLKMEALAEEMRILYVAMTRAQEKLILVGSARNLPGCARRWCGPAGTAGWALPDGFLAGAGTCLDWLMAALARHRDGAAIRELAACAEEPPAEVAADRSRWRVFFSDSRGRSAEMAEEPVLLAKVRRMEPLEPAGPLAGMIKARLEWSYPAIAVLGRPAKAAVTELKRRFDQLAAGEEQYGEGHFESFRLTAGRPLFMQEKRGLTAAEAGEALHLVMQHLDLTGSLDITAVRSQIEDMVWRELLTPEQAAAVPAEKIAAFFAGPLGRRLLAGFQVLRELPFTMAVQAAEIYPELVPYPGEAVLVQGVIDCLVDEGDGYLLLDYKTGKRPLGRPEEAARRYCGQLNIYARAVESILGRKVKEKYLYLFEPGLEIRCD</sequence>